<sequence>MKTKLNELLEFPTPFTYKVMGQALPELVDQVVEVVQRHAPGDYSPTVKPSSKGNYHSVSITINATHIEQVETLYEELGNIDIVRMVL</sequence>
<gene>
    <name evidence="1" type="primary">ybeD</name>
    <name type="ordered locus">SSPA1950</name>
</gene>
<accession>B5BCF8</accession>
<protein>
    <recommendedName>
        <fullName evidence="1">UPF0250 protein YbeD</fullName>
    </recommendedName>
</protein>
<reference key="1">
    <citation type="journal article" date="2009" name="BMC Genomics">
        <title>Pseudogene accumulation in the evolutionary histories of Salmonella enterica serovars Paratyphi A and Typhi.</title>
        <authorList>
            <person name="Holt K.E."/>
            <person name="Thomson N.R."/>
            <person name="Wain J."/>
            <person name="Langridge G.C."/>
            <person name="Hasan R."/>
            <person name="Bhutta Z.A."/>
            <person name="Quail M.A."/>
            <person name="Norbertczak H."/>
            <person name="Walker D."/>
            <person name="Simmonds M."/>
            <person name="White B."/>
            <person name="Bason N."/>
            <person name="Mungall K."/>
            <person name="Dougan G."/>
            <person name="Parkhill J."/>
        </authorList>
    </citation>
    <scope>NUCLEOTIDE SEQUENCE [LARGE SCALE GENOMIC DNA]</scope>
    <source>
        <strain>AKU_12601</strain>
    </source>
</reference>
<comment type="similarity">
    <text evidence="1">Belongs to the UPF0250 family.</text>
</comment>
<feature type="chain" id="PRO_1000131259" description="UPF0250 protein YbeD">
    <location>
        <begin position="1"/>
        <end position="87"/>
    </location>
</feature>
<dbReference type="EMBL" id="FM200053">
    <property type="protein sequence ID" value="CAR60151.1"/>
    <property type="molecule type" value="Genomic_DNA"/>
</dbReference>
<dbReference type="RefSeq" id="WP_000850547.1">
    <property type="nucleotide sequence ID" value="NC_011147.1"/>
</dbReference>
<dbReference type="SMR" id="B5BCF8"/>
<dbReference type="GeneID" id="83645644"/>
<dbReference type="KEGG" id="sek:SSPA1950"/>
<dbReference type="HOGENOM" id="CLU_161438_2_1_6"/>
<dbReference type="Proteomes" id="UP000001869">
    <property type="component" value="Chromosome"/>
</dbReference>
<dbReference type="GO" id="GO:0005829">
    <property type="term" value="C:cytosol"/>
    <property type="evidence" value="ECO:0007669"/>
    <property type="project" value="TreeGrafter"/>
</dbReference>
<dbReference type="FunFam" id="3.30.70.260:FF:000002">
    <property type="entry name" value="UPF0250 protein YbeD"/>
    <property type="match status" value="1"/>
</dbReference>
<dbReference type="Gene3D" id="3.30.70.260">
    <property type="match status" value="1"/>
</dbReference>
<dbReference type="HAMAP" id="MF_00659">
    <property type="entry name" value="UPF0250"/>
    <property type="match status" value="1"/>
</dbReference>
<dbReference type="InterPro" id="IPR007454">
    <property type="entry name" value="UPF0250_YbeD-like"/>
</dbReference>
<dbReference type="InterPro" id="IPR027471">
    <property type="entry name" value="YbeD-like_sf"/>
</dbReference>
<dbReference type="NCBIfam" id="NF003447">
    <property type="entry name" value="PRK04998.1"/>
    <property type="match status" value="1"/>
</dbReference>
<dbReference type="PANTHER" id="PTHR38036">
    <property type="entry name" value="UPF0250 PROTEIN YBED"/>
    <property type="match status" value="1"/>
</dbReference>
<dbReference type="PANTHER" id="PTHR38036:SF1">
    <property type="entry name" value="UPF0250 PROTEIN YBED"/>
    <property type="match status" value="1"/>
</dbReference>
<dbReference type="Pfam" id="PF04359">
    <property type="entry name" value="DUF493"/>
    <property type="match status" value="1"/>
</dbReference>
<dbReference type="SUPFAM" id="SSF117991">
    <property type="entry name" value="YbeD/HP0495-like"/>
    <property type="match status" value="1"/>
</dbReference>
<organism>
    <name type="scientific">Salmonella paratyphi A (strain AKU_12601)</name>
    <dbReference type="NCBI Taxonomy" id="554290"/>
    <lineage>
        <taxon>Bacteria</taxon>
        <taxon>Pseudomonadati</taxon>
        <taxon>Pseudomonadota</taxon>
        <taxon>Gammaproteobacteria</taxon>
        <taxon>Enterobacterales</taxon>
        <taxon>Enterobacteriaceae</taxon>
        <taxon>Salmonella</taxon>
    </lineage>
</organism>
<proteinExistence type="inferred from homology"/>
<name>YBED_SALPK</name>
<evidence type="ECO:0000255" key="1">
    <source>
        <dbReference type="HAMAP-Rule" id="MF_00659"/>
    </source>
</evidence>